<proteinExistence type="evidence at transcript level"/>
<reference key="1">
    <citation type="journal article" date="2007" name="Peptides">
        <title>Identification of six novel T-1 conotoxins from Conus pulicarius by molecular cloning.</title>
        <authorList>
            <person name="Peng C."/>
            <person name="Wu X."/>
            <person name="Han Y."/>
            <person name="Yuan D."/>
            <person name="Chi C."/>
            <person name="Wang C."/>
        </authorList>
    </citation>
    <scope>NUCLEOTIDE SEQUENCE [MRNA]</scope>
    <source>
        <tissue>Venom duct</tissue>
    </source>
</reference>
<name>CT54_CONPL</name>
<keyword id="KW-0027">Amidation</keyword>
<keyword id="KW-1015">Disulfide bond</keyword>
<keyword id="KW-0964">Secreted</keyword>
<keyword id="KW-0732">Signal</keyword>
<keyword id="KW-0800">Toxin</keyword>
<organism>
    <name type="scientific">Conus pulicarius</name>
    <name type="common">Flea-bitten cone</name>
    <dbReference type="NCBI Taxonomy" id="93154"/>
    <lineage>
        <taxon>Eukaryota</taxon>
        <taxon>Metazoa</taxon>
        <taxon>Spiralia</taxon>
        <taxon>Lophotrochozoa</taxon>
        <taxon>Mollusca</taxon>
        <taxon>Gastropoda</taxon>
        <taxon>Caenogastropoda</taxon>
        <taxon>Neogastropoda</taxon>
        <taxon>Conoidea</taxon>
        <taxon>Conidae</taxon>
        <taxon>Conus</taxon>
    </lineage>
</organism>
<sequence>MRCVPVFVILLLLIASTPSVDATQKTKDDMSLASFHDNAKRFLQTLRNTRSCCPEEITCCPWG</sequence>
<feature type="signal peptide" evidence="2">
    <location>
        <begin position="1"/>
        <end position="22"/>
    </location>
</feature>
<feature type="propeptide" id="PRO_0000315449" evidence="1">
    <location>
        <begin position="23"/>
        <end position="50"/>
    </location>
</feature>
<feature type="peptide" id="PRO_0000315450" description="Conotoxin Pu5.4">
    <location>
        <begin position="51"/>
        <end position="62"/>
    </location>
</feature>
<feature type="modified residue" description="Tryptophan amide" evidence="1">
    <location>
        <position position="62"/>
    </location>
</feature>
<comment type="subcellular location">
    <subcellularLocation>
        <location evidence="1">Secreted</location>
    </subcellularLocation>
</comment>
<comment type="tissue specificity">
    <text>Expressed by the venom duct.</text>
</comment>
<comment type="domain">
    <text>The cysteine framework is V (CC-CC).</text>
</comment>
<comment type="PTM">
    <text evidence="4">Contains 2 disulfide bonds that can be either 'C1-C3, C2-C4' or 'C1-C4, C2-C3', since these disulfide connectivities have been observed for conotoxins with cysteine framework V (for examples, see AC P0DQQ7 and AC P81755).</text>
</comment>
<comment type="similarity">
    <text evidence="4">Belongs to the conotoxin T superfamily.</text>
</comment>
<accession>P0C639</accession>
<accession>A8RCR2</accession>
<evidence type="ECO:0000250" key="1"/>
<evidence type="ECO:0000255" key="2"/>
<evidence type="ECO:0000303" key="3">
    <source>
    </source>
</evidence>
<evidence type="ECO:0000305" key="4"/>
<protein>
    <recommendedName>
        <fullName evidence="3">Conotoxin Pu5.4</fullName>
    </recommendedName>
</protein>
<dbReference type="EMBL" id="EF488466">
    <property type="protein sequence ID" value="ABS01338.1"/>
    <property type="molecule type" value="mRNA"/>
</dbReference>
<dbReference type="ConoServer" id="2795">
    <property type="toxin name" value="Pu5.4 precursor"/>
</dbReference>
<dbReference type="GO" id="GO:0005576">
    <property type="term" value="C:extracellular region"/>
    <property type="evidence" value="ECO:0007669"/>
    <property type="project" value="UniProtKB-SubCell"/>
</dbReference>
<dbReference type="GO" id="GO:0090729">
    <property type="term" value="F:toxin activity"/>
    <property type="evidence" value="ECO:0007669"/>
    <property type="project" value="UniProtKB-KW"/>
</dbReference>
<dbReference type="InterPro" id="IPR031565">
    <property type="entry name" value="T-conotoxin"/>
</dbReference>
<dbReference type="Pfam" id="PF16981">
    <property type="entry name" value="Chi-conotoxin"/>
    <property type="match status" value="1"/>
</dbReference>